<protein>
    <recommendedName>
        <fullName evidence="1">Chaperonin GroEL 2/3</fullName>
        <ecNumber evidence="1">5.6.1.7</ecNumber>
    </recommendedName>
    <alternativeName>
        <fullName evidence="1">60 kDa chaperonin 2/3</fullName>
    </alternativeName>
    <alternativeName>
        <fullName evidence="1">Chaperonin-60 2/3</fullName>
        <shortName evidence="1">Cpn60 2/3</shortName>
    </alternativeName>
</protein>
<comment type="function">
    <text evidence="1">Together with its co-chaperonin GroES, plays an essential role in assisting protein folding. The GroEL-GroES system forms a nano-cage that allows encapsulation of the non-native substrate proteins and provides a physical environment optimized to promote and accelerate protein folding.</text>
</comment>
<comment type="catalytic activity">
    <reaction evidence="1">
        <text>ATP + H2O + a folded polypeptide = ADP + phosphate + an unfolded polypeptide.</text>
        <dbReference type="EC" id="5.6.1.7"/>
    </reaction>
</comment>
<comment type="subunit">
    <text evidence="1">Forms a cylinder of 14 subunits composed of two heptameric rings stacked back-to-back. Interacts with the co-chaperonin GroES.</text>
</comment>
<comment type="subcellular location">
    <subcellularLocation>
        <location evidence="1">Cytoplasm</location>
    </subcellularLocation>
</comment>
<comment type="similarity">
    <text evidence="1">Belongs to the chaperonin (HSP60) family.</text>
</comment>
<keyword id="KW-0067">ATP-binding</keyword>
<keyword id="KW-0143">Chaperone</keyword>
<keyword id="KW-0963">Cytoplasm</keyword>
<keyword id="KW-0413">Isomerase</keyword>
<keyword id="KW-0547">Nucleotide-binding</keyword>
<keyword id="KW-1185">Reference proteome</keyword>
<name>CH602_PARXL</name>
<gene>
    <name evidence="1" type="primary">groEL2</name>
    <name evidence="1" type="synonym">groL2</name>
    <name type="ordered locus">Bxeno_A1804</name>
    <name type="ORF">Bxe_A4544</name>
</gene>
<gene>
    <name evidence="1" type="primary">groEL3</name>
    <name evidence="1" type="synonym">groL3</name>
    <name type="ordered locus">Bxeno_A1834</name>
    <name type="ORF">Bxe_A2609</name>
</gene>
<evidence type="ECO:0000255" key="1">
    <source>
        <dbReference type="HAMAP-Rule" id="MF_00600"/>
    </source>
</evidence>
<dbReference type="EC" id="5.6.1.7" evidence="1"/>
<dbReference type="EMBL" id="CP000270">
    <property type="protein sequence ID" value="ABE30342.1"/>
    <property type="molecule type" value="Genomic_DNA"/>
</dbReference>
<dbReference type="EMBL" id="CP000270">
    <property type="protein sequence ID" value="ABE30372.1"/>
    <property type="molecule type" value="Genomic_DNA"/>
</dbReference>
<dbReference type="RefSeq" id="WP_011488037.1">
    <property type="nucleotide sequence ID" value="NC_007951.1"/>
</dbReference>
<dbReference type="SMR" id="Q13ZW7"/>
<dbReference type="STRING" id="266265.Bxe_A2609"/>
<dbReference type="KEGG" id="bxb:DR64_303"/>
<dbReference type="KEGG" id="bxe:Bxe_A2609"/>
<dbReference type="KEGG" id="bxe:Bxe_A4544"/>
<dbReference type="PATRIC" id="fig|266265.5.peg.1879"/>
<dbReference type="eggNOG" id="COG0459">
    <property type="taxonomic scope" value="Bacteria"/>
</dbReference>
<dbReference type="OrthoDB" id="9766614at2"/>
<dbReference type="Proteomes" id="UP000001817">
    <property type="component" value="Chromosome 1"/>
</dbReference>
<dbReference type="GO" id="GO:0005737">
    <property type="term" value="C:cytoplasm"/>
    <property type="evidence" value="ECO:0007669"/>
    <property type="project" value="UniProtKB-SubCell"/>
</dbReference>
<dbReference type="GO" id="GO:0005524">
    <property type="term" value="F:ATP binding"/>
    <property type="evidence" value="ECO:0007669"/>
    <property type="project" value="UniProtKB-UniRule"/>
</dbReference>
<dbReference type="GO" id="GO:0140662">
    <property type="term" value="F:ATP-dependent protein folding chaperone"/>
    <property type="evidence" value="ECO:0007669"/>
    <property type="project" value="InterPro"/>
</dbReference>
<dbReference type="GO" id="GO:0016853">
    <property type="term" value="F:isomerase activity"/>
    <property type="evidence" value="ECO:0007669"/>
    <property type="project" value="UniProtKB-KW"/>
</dbReference>
<dbReference type="GO" id="GO:0051082">
    <property type="term" value="F:unfolded protein binding"/>
    <property type="evidence" value="ECO:0007669"/>
    <property type="project" value="UniProtKB-UniRule"/>
</dbReference>
<dbReference type="GO" id="GO:0042026">
    <property type="term" value="P:protein refolding"/>
    <property type="evidence" value="ECO:0007669"/>
    <property type="project" value="UniProtKB-UniRule"/>
</dbReference>
<dbReference type="CDD" id="cd03344">
    <property type="entry name" value="GroEL"/>
    <property type="match status" value="1"/>
</dbReference>
<dbReference type="FunFam" id="1.10.560.10:FF:000001">
    <property type="entry name" value="60 kDa chaperonin"/>
    <property type="match status" value="1"/>
</dbReference>
<dbReference type="FunFam" id="3.50.7.10:FF:000001">
    <property type="entry name" value="60 kDa chaperonin"/>
    <property type="match status" value="1"/>
</dbReference>
<dbReference type="Gene3D" id="3.50.7.10">
    <property type="entry name" value="GroEL"/>
    <property type="match status" value="1"/>
</dbReference>
<dbReference type="Gene3D" id="1.10.560.10">
    <property type="entry name" value="GroEL-like equatorial domain"/>
    <property type="match status" value="1"/>
</dbReference>
<dbReference type="Gene3D" id="3.30.260.10">
    <property type="entry name" value="TCP-1-like chaperonin intermediate domain"/>
    <property type="match status" value="1"/>
</dbReference>
<dbReference type="HAMAP" id="MF_00600">
    <property type="entry name" value="CH60"/>
    <property type="match status" value="1"/>
</dbReference>
<dbReference type="InterPro" id="IPR018370">
    <property type="entry name" value="Chaperonin_Cpn60_CS"/>
</dbReference>
<dbReference type="InterPro" id="IPR001844">
    <property type="entry name" value="Cpn60/GroEL"/>
</dbReference>
<dbReference type="InterPro" id="IPR002423">
    <property type="entry name" value="Cpn60/GroEL/TCP-1"/>
</dbReference>
<dbReference type="InterPro" id="IPR027409">
    <property type="entry name" value="GroEL-like_apical_dom_sf"/>
</dbReference>
<dbReference type="InterPro" id="IPR027413">
    <property type="entry name" value="GROEL-like_equatorial_sf"/>
</dbReference>
<dbReference type="InterPro" id="IPR027410">
    <property type="entry name" value="TCP-1-like_intermed_sf"/>
</dbReference>
<dbReference type="NCBIfam" id="TIGR02348">
    <property type="entry name" value="GroEL"/>
    <property type="match status" value="1"/>
</dbReference>
<dbReference type="NCBIfam" id="NF000592">
    <property type="entry name" value="PRK00013.1"/>
    <property type="match status" value="1"/>
</dbReference>
<dbReference type="NCBIfam" id="NF009487">
    <property type="entry name" value="PRK12849.1"/>
    <property type="match status" value="1"/>
</dbReference>
<dbReference type="NCBIfam" id="NF009488">
    <property type="entry name" value="PRK12850.1"/>
    <property type="match status" value="1"/>
</dbReference>
<dbReference type="NCBIfam" id="NF009489">
    <property type="entry name" value="PRK12851.1"/>
    <property type="match status" value="1"/>
</dbReference>
<dbReference type="PANTHER" id="PTHR45633">
    <property type="entry name" value="60 KDA HEAT SHOCK PROTEIN, MITOCHONDRIAL"/>
    <property type="match status" value="1"/>
</dbReference>
<dbReference type="Pfam" id="PF00118">
    <property type="entry name" value="Cpn60_TCP1"/>
    <property type="match status" value="1"/>
</dbReference>
<dbReference type="PRINTS" id="PR00298">
    <property type="entry name" value="CHAPERONIN60"/>
</dbReference>
<dbReference type="SUPFAM" id="SSF52029">
    <property type="entry name" value="GroEL apical domain-like"/>
    <property type="match status" value="1"/>
</dbReference>
<dbReference type="SUPFAM" id="SSF48592">
    <property type="entry name" value="GroEL equatorial domain-like"/>
    <property type="match status" value="1"/>
</dbReference>
<dbReference type="SUPFAM" id="SSF54849">
    <property type="entry name" value="GroEL-intermediate domain like"/>
    <property type="match status" value="1"/>
</dbReference>
<dbReference type="PROSITE" id="PS00296">
    <property type="entry name" value="CHAPERONINS_CPN60"/>
    <property type="match status" value="1"/>
</dbReference>
<accession>Q13ZW7</accession>
<proteinExistence type="inferred from homology"/>
<organism>
    <name type="scientific">Paraburkholderia xenovorans (strain LB400)</name>
    <dbReference type="NCBI Taxonomy" id="266265"/>
    <lineage>
        <taxon>Bacteria</taxon>
        <taxon>Pseudomonadati</taxon>
        <taxon>Pseudomonadota</taxon>
        <taxon>Betaproteobacteria</taxon>
        <taxon>Burkholderiales</taxon>
        <taxon>Burkholderiaceae</taxon>
        <taxon>Paraburkholderia</taxon>
    </lineage>
</organism>
<reference key="1">
    <citation type="journal article" date="2006" name="Proc. Natl. Acad. Sci. U.S.A.">
        <title>Burkholderia xenovorans LB400 harbors a multi-replicon, 9.73-Mbp genome shaped for versatility.</title>
        <authorList>
            <person name="Chain P.S.G."/>
            <person name="Denef V.J."/>
            <person name="Konstantinidis K.T."/>
            <person name="Vergez L.M."/>
            <person name="Agullo L."/>
            <person name="Reyes V.L."/>
            <person name="Hauser L."/>
            <person name="Cordova M."/>
            <person name="Gomez L."/>
            <person name="Gonzalez M."/>
            <person name="Land M."/>
            <person name="Lao V."/>
            <person name="Larimer F."/>
            <person name="LiPuma J.J."/>
            <person name="Mahenthiralingam E."/>
            <person name="Malfatti S.A."/>
            <person name="Marx C.J."/>
            <person name="Parnell J.J."/>
            <person name="Ramette A."/>
            <person name="Richardson P."/>
            <person name="Seeger M."/>
            <person name="Smith D."/>
            <person name="Spilker T."/>
            <person name="Sul W.J."/>
            <person name="Tsoi T.V."/>
            <person name="Ulrich L.E."/>
            <person name="Zhulin I.B."/>
            <person name="Tiedje J.M."/>
        </authorList>
    </citation>
    <scope>NUCLEOTIDE SEQUENCE [LARGE SCALE GENOMIC DNA]</scope>
    <source>
        <strain>LB400</strain>
    </source>
</reference>
<sequence>MSAKDVKFHDSARSRIVKGVNVLADAVKVTLGPKGRNVLIERSFGAPTITKDGVSVAKEIELKDRFENMGAQVVKQVASKTADVAGDGTTTATVLAQSIVQEGMKHVAAGMNPMDLKRGIDKAVAAVLDELHRLSKPIKTSREIAQVGAISANADEAIGKIIADAMDKVGKEGVITVEDGKSLENELEVVEGMQFDRGYLSPYFINDPDKQVAHLDDPLILLHDKKISSIRDLLPVLEAAAKAGKPLLIIAEDVEGEALTTLVVNSMRGVLKVAAVKAPGFGDRRKALLEDIAILTGATVISEETGKQLEKATLEELGRAKRVEVQKENTIIIDGAGDQTRIDARVKAIRAQIEEATSDYDREKLQERVAKLAGGVAVIKVGAATEVEMKEKKDRVDDALHATRAAVEEGIVPGGGVALLRARSAISSLTGANADQDAGIRIVLRALEAPLRVIAANAGDEPSVVVAKVLSGKGNYGYNAATGEYGDLVETGVVDPTKVTRTALQNAASIAGLILTTDATVAEAPKEEKAVPAPAPELEY</sequence>
<feature type="chain" id="PRO_0000256888" description="Chaperonin GroEL 2/3">
    <location>
        <begin position="1"/>
        <end position="540"/>
    </location>
</feature>
<feature type="binding site" evidence="1">
    <location>
        <begin position="30"/>
        <end position="33"/>
    </location>
    <ligand>
        <name>ATP</name>
        <dbReference type="ChEBI" id="CHEBI:30616"/>
    </ligand>
</feature>
<feature type="binding site" evidence="1">
    <location>
        <position position="51"/>
    </location>
    <ligand>
        <name>ATP</name>
        <dbReference type="ChEBI" id="CHEBI:30616"/>
    </ligand>
</feature>
<feature type="binding site" evidence="1">
    <location>
        <begin position="87"/>
        <end position="91"/>
    </location>
    <ligand>
        <name>ATP</name>
        <dbReference type="ChEBI" id="CHEBI:30616"/>
    </ligand>
</feature>
<feature type="binding site" evidence="1">
    <location>
        <position position="415"/>
    </location>
    <ligand>
        <name>ATP</name>
        <dbReference type="ChEBI" id="CHEBI:30616"/>
    </ligand>
</feature>
<feature type="binding site" evidence="1">
    <location>
        <begin position="479"/>
        <end position="481"/>
    </location>
    <ligand>
        <name>ATP</name>
        <dbReference type="ChEBI" id="CHEBI:30616"/>
    </ligand>
</feature>
<feature type="binding site" evidence="1">
    <location>
        <position position="495"/>
    </location>
    <ligand>
        <name>ATP</name>
        <dbReference type="ChEBI" id="CHEBI:30616"/>
    </ligand>
</feature>